<sequence length="141" mass="15749">MLTADDKKLIQATWDKVQGHQEDFGAEALQRMFITYPPTKTYFPHFDLSPGSDQVRGHGKKVVNALGNAVKSMDNLSQALSELSNLHAYNLRVDPVNFKLLSQCFQVVLAVHLGKEYTPEVHAAFDKFLSAVAAVLAEKYR</sequence>
<name>HBAD_AEGMO</name>
<proteinExistence type="evidence at protein level"/>
<keyword id="KW-0903">Direct protein sequencing</keyword>
<keyword id="KW-0349">Heme</keyword>
<keyword id="KW-0408">Iron</keyword>
<keyword id="KW-0479">Metal-binding</keyword>
<keyword id="KW-0561">Oxygen transport</keyword>
<keyword id="KW-0813">Transport</keyword>
<gene>
    <name type="primary">HBAD</name>
</gene>
<evidence type="ECO:0000255" key="1">
    <source>
        <dbReference type="PROSITE-ProRule" id="PRU00238"/>
    </source>
</evidence>
<reference key="1">
    <citation type="journal article" date="1987" name="Biol. Chem. Hoppe-Seyler">
        <title>High altitude respiration of birds. The primary structures of the major and minor hemoglobin component of adult European black vulture (Aegypius monachus, Aegypiinae).</title>
        <authorList>
            <person name="Hiebl I."/>
            <person name="Schneeganss D."/>
            <person name="Grimm F."/>
            <person name="Kosters J."/>
            <person name="Braunitzer G."/>
        </authorList>
    </citation>
    <scope>PROTEIN SEQUENCE</scope>
</reference>
<protein>
    <recommendedName>
        <fullName>Hemoglobin subunit alpha-D</fullName>
    </recommendedName>
    <alternativeName>
        <fullName>Alpha-D-globin</fullName>
    </alternativeName>
    <alternativeName>
        <fullName>Hemoglobin alpha-D chain</fullName>
    </alternativeName>
</protein>
<accession>P68059</accession>
<accession>P07416</accession>
<comment type="function">
    <text>Involved in oxygen transport from the lung to the various peripheral tissues.</text>
</comment>
<comment type="subunit">
    <text>Heterotetramer of two alpha-D chains and two beta chains.</text>
</comment>
<comment type="tissue specificity">
    <text>Red blood cells.</text>
</comment>
<comment type="developmental stage">
    <text>In birds, the alpha-D chain occurs in a minor hemoglobin component, called hemoglobin d, which is expressed in late embryonic and adult life.</text>
</comment>
<comment type="similarity">
    <text evidence="1">Belongs to the globin family.</text>
</comment>
<feature type="chain" id="PRO_0000052815" description="Hemoglobin subunit alpha-D">
    <location>
        <begin position="1"/>
        <end position="141"/>
    </location>
</feature>
<feature type="domain" description="Globin" evidence="1">
    <location>
        <begin position="1"/>
        <end position="141"/>
    </location>
</feature>
<feature type="binding site" description="distal binding residue">
    <location>
        <position position="58"/>
    </location>
    <ligand>
        <name>heme b</name>
        <dbReference type="ChEBI" id="CHEBI:60344"/>
    </ligand>
    <ligandPart>
        <name>Fe</name>
        <dbReference type="ChEBI" id="CHEBI:18248"/>
    </ligandPart>
</feature>
<feature type="binding site" description="proximal binding residue">
    <location>
        <position position="87"/>
    </location>
    <ligand>
        <name>heme b</name>
        <dbReference type="ChEBI" id="CHEBI:60344"/>
    </ligand>
    <ligandPart>
        <name>Fe</name>
        <dbReference type="ChEBI" id="CHEBI:18248"/>
    </ligandPart>
</feature>
<organism>
    <name type="scientific">Aegypius monachus</name>
    <name type="common">Cinereous vulture</name>
    <dbReference type="NCBI Taxonomy" id="8959"/>
    <lineage>
        <taxon>Eukaryota</taxon>
        <taxon>Metazoa</taxon>
        <taxon>Chordata</taxon>
        <taxon>Craniata</taxon>
        <taxon>Vertebrata</taxon>
        <taxon>Euteleostomi</taxon>
        <taxon>Archelosauria</taxon>
        <taxon>Archosauria</taxon>
        <taxon>Dinosauria</taxon>
        <taxon>Saurischia</taxon>
        <taxon>Theropoda</taxon>
        <taxon>Coelurosauria</taxon>
        <taxon>Aves</taxon>
        <taxon>Neognathae</taxon>
        <taxon>Neoaves</taxon>
        <taxon>Telluraves</taxon>
        <taxon>Accipitrimorphae</taxon>
        <taxon>Accipitriformes</taxon>
        <taxon>Accipitridae</taxon>
        <taxon>Accipitrinae</taxon>
        <taxon>Aegypius</taxon>
    </lineage>
</organism>
<dbReference type="PIR" id="A26429">
    <property type="entry name" value="A26429"/>
</dbReference>
<dbReference type="SMR" id="P68059"/>
<dbReference type="GO" id="GO:0072562">
    <property type="term" value="C:blood microparticle"/>
    <property type="evidence" value="ECO:0007669"/>
    <property type="project" value="TreeGrafter"/>
</dbReference>
<dbReference type="GO" id="GO:0031838">
    <property type="term" value="C:haptoglobin-hemoglobin complex"/>
    <property type="evidence" value="ECO:0007669"/>
    <property type="project" value="TreeGrafter"/>
</dbReference>
<dbReference type="GO" id="GO:0005833">
    <property type="term" value="C:hemoglobin complex"/>
    <property type="evidence" value="ECO:0007669"/>
    <property type="project" value="InterPro"/>
</dbReference>
<dbReference type="GO" id="GO:0031720">
    <property type="term" value="F:haptoglobin binding"/>
    <property type="evidence" value="ECO:0007669"/>
    <property type="project" value="TreeGrafter"/>
</dbReference>
<dbReference type="GO" id="GO:0020037">
    <property type="term" value="F:heme binding"/>
    <property type="evidence" value="ECO:0007669"/>
    <property type="project" value="InterPro"/>
</dbReference>
<dbReference type="GO" id="GO:0046872">
    <property type="term" value="F:metal ion binding"/>
    <property type="evidence" value="ECO:0007669"/>
    <property type="project" value="UniProtKB-KW"/>
</dbReference>
<dbReference type="GO" id="GO:0043177">
    <property type="term" value="F:organic acid binding"/>
    <property type="evidence" value="ECO:0007669"/>
    <property type="project" value="TreeGrafter"/>
</dbReference>
<dbReference type="GO" id="GO:0019825">
    <property type="term" value="F:oxygen binding"/>
    <property type="evidence" value="ECO:0007669"/>
    <property type="project" value="InterPro"/>
</dbReference>
<dbReference type="GO" id="GO:0005344">
    <property type="term" value="F:oxygen carrier activity"/>
    <property type="evidence" value="ECO:0007669"/>
    <property type="project" value="UniProtKB-KW"/>
</dbReference>
<dbReference type="GO" id="GO:0004601">
    <property type="term" value="F:peroxidase activity"/>
    <property type="evidence" value="ECO:0007669"/>
    <property type="project" value="TreeGrafter"/>
</dbReference>
<dbReference type="GO" id="GO:0042744">
    <property type="term" value="P:hydrogen peroxide catabolic process"/>
    <property type="evidence" value="ECO:0007669"/>
    <property type="project" value="TreeGrafter"/>
</dbReference>
<dbReference type="CDD" id="cd08927">
    <property type="entry name" value="Hb-alpha-like"/>
    <property type="match status" value="1"/>
</dbReference>
<dbReference type="FunFam" id="1.10.490.10:FF:000002">
    <property type="entry name" value="Hemoglobin subunit alpha"/>
    <property type="match status" value="1"/>
</dbReference>
<dbReference type="Gene3D" id="1.10.490.10">
    <property type="entry name" value="Globins"/>
    <property type="match status" value="1"/>
</dbReference>
<dbReference type="InterPro" id="IPR000971">
    <property type="entry name" value="Globin"/>
</dbReference>
<dbReference type="InterPro" id="IPR009050">
    <property type="entry name" value="Globin-like_sf"/>
</dbReference>
<dbReference type="InterPro" id="IPR012292">
    <property type="entry name" value="Globin/Proto"/>
</dbReference>
<dbReference type="InterPro" id="IPR002338">
    <property type="entry name" value="Hemoglobin_a-typ"/>
</dbReference>
<dbReference type="InterPro" id="IPR050056">
    <property type="entry name" value="Hemoglobin_oxygen_transport"/>
</dbReference>
<dbReference type="PANTHER" id="PTHR11442">
    <property type="entry name" value="HEMOGLOBIN FAMILY MEMBER"/>
    <property type="match status" value="1"/>
</dbReference>
<dbReference type="PANTHER" id="PTHR11442:SF41">
    <property type="entry name" value="HEMOGLOBIN SUBUNIT ZETA"/>
    <property type="match status" value="1"/>
</dbReference>
<dbReference type="Pfam" id="PF00042">
    <property type="entry name" value="Globin"/>
    <property type="match status" value="1"/>
</dbReference>
<dbReference type="PRINTS" id="PR00612">
    <property type="entry name" value="ALPHAHAEM"/>
</dbReference>
<dbReference type="SUPFAM" id="SSF46458">
    <property type="entry name" value="Globin-like"/>
    <property type="match status" value="1"/>
</dbReference>
<dbReference type="PROSITE" id="PS01033">
    <property type="entry name" value="GLOBIN"/>
    <property type="match status" value="1"/>
</dbReference>